<accession>Q7V349</accession>
<evidence type="ECO:0000255" key="1">
    <source>
        <dbReference type="HAMAP-Rule" id="MF_01554"/>
    </source>
</evidence>
<sequence>MQSIFGTDGIRGIFDKELTYSLAYKVGYALGVSTKTNNPILIGRDTRVSGYILIEAISRGINAAGKEFIYLGICPTPAIPFLIKKEKFSGGIMISASHNPPEYNGIKIFDNNGEKIKKKLENQIELILETANNLKLSTYKKTSIRENNNLFNIYTEGLINTMGDENLDGMKIVLDTCYGSATTCAASIFQKLGANVKVINNEQDGLKINLNCGSTCLDPIIKAIKENNADMGFSFDGDADRVIGVDSEGNIIDGDHILFLWGRELLEEKLLTNNTIISTKMANLGFENTWKKIGGILHRTEVGDKFIFEAIKKKKALLGGEQSGHILSKINDFCGDGILTAIQISKYCKKKNISLRSWLNSSFSPYPQKLTNVLLNFKFKNIDKSYKEFINETIESFSNIKKDNCRVYIRPSGTEPVLRILVEARNQQEVDSLSTKITAELSTKIYKISKTF</sequence>
<reference key="1">
    <citation type="journal article" date="2003" name="Nature">
        <title>Genome divergence in two Prochlorococcus ecotypes reflects oceanic niche differentiation.</title>
        <authorList>
            <person name="Rocap G."/>
            <person name="Larimer F.W."/>
            <person name="Lamerdin J.E."/>
            <person name="Malfatti S."/>
            <person name="Chain P."/>
            <person name="Ahlgren N.A."/>
            <person name="Arellano A."/>
            <person name="Coleman M."/>
            <person name="Hauser L."/>
            <person name="Hess W.R."/>
            <person name="Johnson Z.I."/>
            <person name="Land M.L."/>
            <person name="Lindell D."/>
            <person name="Post A.F."/>
            <person name="Regala W."/>
            <person name="Shah M."/>
            <person name="Shaw S.L."/>
            <person name="Steglich C."/>
            <person name="Sullivan M.B."/>
            <person name="Ting C.S."/>
            <person name="Tolonen A."/>
            <person name="Webb E.A."/>
            <person name="Zinser E.R."/>
            <person name="Chisholm S.W."/>
        </authorList>
    </citation>
    <scope>NUCLEOTIDE SEQUENCE [LARGE SCALE GENOMIC DNA]</scope>
    <source>
        <strain>CCMP1986 / NIES-2087 / MED4</strain>
    </source>
</reference>
<keyword id="KW-0413">Isomerase</keyword>
<keyword id="KW-0460">Magnesium</keyword>
<keyword id="KW-0479">Metal-binding</keyword>
<keyword id="KW-0597">Phosphoprotein</keyword>
<feature type="chain" id="PRO_0000147935" description="Phosphoglucosamine mutase">
    <location>
        <begin position="1"/>
        <end position="452"/>
    </location>
</feature>
<feature type="active site" description="Phosphoserine intermediate" evidence="1">
    <location>
        <position position="97"/>
    </location>
</feature>
<feature type="binding site" description="via phosphate group" evidence="1">
    <location>
        <position position="97"/>
    </location>
    <ligand>
        <name>Mg(2+)</name>
        <dbReference type="ChEBI" id="CHEBI:18420"/>
    </ligand>
</feature>
<feature type="binding site" evidence="1">
    <location>
        <position position="236"/>
    </location>
    <ligand>
        <name>Mg(2+)</name>
        <dbReference type="ChEBI" id="CHEBI:18420"/>
    </ligand>
</feature>
<feature type="binding site" evidence="1">
    <location>
        <position position="238"/>
    </location>
    <ligand>
        <name>Mg(2+)</name>
        <dbReference type="ChEBI" id="CHEBI:18420"/>
    </ligand>
</feature>
<feature type="binding site" evidence="1">
    <location>
        <position position="240"/>
    </location>
    <ligand>
        <name>Mg(2+)</name>
        <dbReference type="ChEBI" id="CHEBI:18420"/>
    </ligand>
</feature>
<feature type="modified residue" description="Phosphoserine" evidence="1">
    <location>
        <position position="97"/>
    </location>
</feature>
<dbReference type="EC" id="5.4.2.10" evidence="1"/>
<dbReference type="EMBL" id="BX548174">
    <property type="protein sequence ID" value="CAE18700.1"/>
    <property type="molecule type" value="Genomic_DNA"/>
</dbReference>
<dbReference type="RefSeq" id="WP_011131879.1">
    <property type="nucleotide sequence ID" value="NC_005072.1"/>
</dbReference>
<dbReference type="SMR" id="Q7V349"/>
<dbReference type="STRING" id="59919.PMM0241"/>
<dbReference type="KEGG" id="pmm:PMM0241"/>
<dbReference type="eggNOG" id="COG1109">
    <property type="taxonomic scope" value="Bacteria"/>
</dbReference>
<dbReference type="HOGENOM" id="CLU_016950_7_0_3"/>
<dbReference type="OrthoDB" id="9806956at2"/>
<dbReference type="Proteomes" id="UP000001026">
    <property type="component" value="Chromosome"/>
</dbReference>
<dbReference type="GO" id="GO:0005829">
    <property type="term" value="C:cytosol"/>
    <property type="evidence" value="ECO:0007669"/>
    <property type="project" value="TreeGrafter"/>
</dbReference>
<dbReference type="GO" id="GO:0000287">
    <property type="term" value="F:magnesium ion binding"/>
    <property type="evidence" value="ECO:0007669"/>
    <property type="project" value="UniProtKB-UniRule"/>
</dbReference>
<dbReference type="GO" id="GO:0008966">
    <property type="term" value="F:phosphoglucosamine mutase activity"/>
    <property type="evidence" value="ECO:0007669"/>
    <property type="project" value="UniProtKB-UniRule"/>
</dbReference>
<dbReference type="GO" id="GO:0004615">
    <property type="term" value="F:phosphomannomutase activity"/>
    <property type="evidence" value="ECO:0007669"/>
    <property type="project" value="TreeGrafter"/>
</dbReference>
<dbReference type="GO" id="GO:0005975">
    <property type="term" value="P:carbohydrate metabolic process"/>
    <property type="evidence" value="ECO:0007669"/>
    <property type="project" value="InterPro"/>
</dbReference>
<dbReference type="GO" id="GO:0009252">
    <property type="term" value="P:peptidoglycan biosynthetic process"/>
    <property type="evidence" value="ECO:0007669"/>
    <property type="project" value="TreeGrafter"/>
</dbReference>
<dbReference type="GO" id="GO:0006048">
    <property type="term" value="P:UDP-N-acetylglucosamine biosynthetic process"/>
    <property type="evidence" value="ECO:0007669"/>
    <property type="project" value="TreeGrafter"/>
</dbReference>
<dbReference type="CDD" id="cd05802">
    <property type="entry name" value="GlmM"/>
    <property type="match status" value="1"/>
</dbReference>
<dbReference type="FunFam" id="3.40.120.10:FF:000001">
    <property type="entry name" value="Phosphoglucosamine mutase"/>
    <property type="match status" value="1"/>
</dbReference>
<dbReference type="Gene3D" id="3.40.120.10">
    <property type="entry name" value="Alpha-D-Glucose-1,6-Bisphosphate, subunit A, domain 3"/>
    <property type="match status" value="3"/>
</dbReference>
<dbReference type="Gene3D" id="3.30.310.50">
    <property type="entry name" value="Alpha-D-phosphohexomutase, C-terminal domain"/>
    <property type="match status" value="1"/>
</dbReference>
<dbReference type="HAMAP" id="MF_01554_B">
    <property type="entry name" value="GlmM_B"/>
    <property type="match status" value="1"/>
</dbReference>
<dbReference type="InterPro" id="IPR005844">
    <property type="entry name" value="A-D-PHexomutase_a/b/a-I"/>
</dbReference>
<dbReference type="InterPro" id="IPR016055">
    <property type="entry name" value="A-D-PHexomutase_a/b/a-I/II/III"/>
</dbReference>
<dbReference type="InterPro" id="IPR005845">
    <property type="entry name" value="A-D-PHexomutase_a/b/a-II"/>
</dbReference>
<dbReference type="InterPro" id="IPR005846">
    <property type="entry name" value="A-D-PHexomutase_a/b/a-III"/>
</dbReference>
<dbReference type="InterPro" id="IPR005843">
    <property type="entry name" value="A-D-PHexomutase_C"/>
</dbReference>
<dbReference type="InterPro" id="IPR036900">
    <property type="entry name" value="A-D-PHexomutase_C_sf"/>
</dbReference>
<dbReference type="InterPro" id="IPR016066">
    <property type="entry name" value="A-D-PHexomutase_CS"/>
</dbReference>
<dbReference type="InterPro" id="IPR005841">
    <property type="entry name" value="Alpha-D-phosphohexomutase_SF"/>
</dbReference>
<dbReference type="InterPro" id="IPR006352">
    <property type="entry name" value="GlmM_bact"/>
</dbReference>
<dbReference type="InterPro" id="IPR050060">
    <property type="entry name" value="Phosphoglucosamine_mutase"/>
</dbReference>
<dbReference type="PANTHER" id="PTHR42946:SF1">
    <property type="entry name" value="PHOSPHOGLUCOMUTASE (ALPHA-D-GLUCOSE-1,6-BISPHOSPHATE-DEPENDENT)"/>
    <property type="match status" value="1"/>
</dbReference>
<dbReference type="PANTHER" id="PTHR42946">
    <property type="entry name" value="PHOSPHOHEXOSE MUTASE"/>
    <property type="match status" value="1"/>
</dbReference>
<dbReference type="Pfam" id="PF02878">
    <property type="entry name" value="PGM_PMM_I"/>
    <property type="match status" value="1"/>
</dbReference>
<dbReference type="Pfam" id="PF02879">
    <property type="entry name" value="PGM_PMM_II"/>
    <property type="match status" value="1"/>
</dbReference>
<dbReference type="Pfam" id="PF02880">
    <property type="entry name" value="PGM_PMM_III"/>
    <property type="match status" value="1"/>
</dbReference>
<dbReference type="Pfam" id="PF00408">
    <property type="entry name" value="PGM_PMM_IV"/>
    <property type="match status" value="1"/>
</dbReference>
<dbReference type="PRINTS" id="PR00509">
    <property type="entry name" value="PGMPMM"/>
</dbReference>
<dbReference type="SUPFAM" id="SSF55957">
    <property type="entry name" value="Phosphoglucomutase, C-terminal domain"/>
    <property type="match status" value="1"/>
</dbReference>
<dbReference type="SUPFAM" id="SSF53738">
    <property type="entry name" value="Phosphoglucomutase, first 3 domains"/>
    <property type="match status" value="3"/>
</dbReference>
<dbReference type="PROSITE" id="PS00710">
    <property type="entry name" value="PGM_PMM"/>
    <property type="match status" value="1"/>
</dbReference>
<organism>
    <name type="scientific">Prochlorococcus marinus subsp. pastoris (strain CCMP1986 / NIES-2087 / MED4)</name>
    <dbReference type="NCBI Taxonomy" id="59919"/>
    <lineage>
        <taxon>Bacteria</taxon>
        <taxon>Bacillati</taxon>
        <taxon>Cyanobacteriota</taxon>
        <taxon>Cyanophyceae</taxon>
        <taxon>Synechococcales</taxon>
        <taxon>Prochlorococcaceae</taxon>
        <taxon>Prochlorococcus</taxon>
    </lineage>
</organism>
<name>GLMM_PROMP</name>
<proteinExistence type="inferred from homology"/>
<comment type="function">
    <text evidence="1">Catalyzes the conversion of glucosamine-6-phosphate to glucosamine-1-phosphate.</text>
</comment>
<comment type="catalytic activity">
    <reaction evidence="1">
        <text>alpha-D-glucosamine 1-phosphate = D-glucosamine 6-phosphate</text>
        <dbReference type="Rhea" id="RHEA:23424"/>
        <dbReference type="ChEBI" id="CHEBI:58516"/>
        <dbReference type="ChEBI" id="CHEBI:58725"/>
        <dbReference type="EC" id="5.4.2.10"/>
    </reaction>
</comment>
<comment type="cofactor">
    <cofactor evidence="1">
        <name>Mg(2+)</name>
        <dbReference type="ChEBI" id="CHEBI:18420"/>
    </cofactor>
    <text evidence="1">Binds 1 Mg(2+) ion per subunit.</text>
</comment>
<comment type="PTM">
    <text evidence="1">Activated by phosphorylation.</text>
</comment>
<comment type="similarity">
    <text evidence="1">Belongs to the phosphohexose mutase family.</text>
</comment>
<protein>
    <recommendedName>
        <fullName evidence="1">Phosphoglucosamine mutase</fullName>
        <ecNumber evidence="1">5.4.2.10</ecNumber>
    </recommendedName>
</protein>
<gene>
    <name evidence="1" type="primary">glmM</name>
    <name type="ordered locus">PMM0241</name>
</gene>